<protein>
    <recommendedName>
        <fullName>Heparanase-like protein 2</fullName>
        <ecNumber>3.2.-.-</ecNumber>
    </recommendedName>
</protein>
<feature type="signal peptide" evidence="2">
    <location>
        <begin position="1"/>
        <end position="21"/>
    </location>
</feature>
<feature type="chain" id="PRO_0000042270" description="Heparanase-like protein 2">
    <location>
        <begin position="22"/>
        <end position="539"/>
    </location>
</feature>
<feature type="active site" description="Proton donor" evidence="2">
    <location>
        <position position="198"/>
    </location>
</feature>
<feature type="active site" description="Nucleophile" evidence="2">
    <location>
        <position position="316"/>
    </location>
</feature>
<feature type="glycosylation site" description="N-linked (GlcNAc...) asparagine" evidence="2">
    <location>
        <position position="143"/>
    </location>
</feature>
<feature type="glycosylation site" description="N-linked (GlcNAc...) asparagine" evidence="2">
    <location>
        <position position="163"/>
    </location>
</feature>
<feature type="glycosylation site" description="N-linked (GlcNAc...) asparagine" evidence="2">
    <location>
        <position position="181"/>
    </location>
</feature>
<feature type="glycosylation site" description="N-linked (GlcNAc...) asparagine" evidence="2">
    <location>
        <position position="300"/>
    </location>
</feature>
<feature type="glycosylation site" description="N-linked (GlcNAc...) asparagine" evidence="2">
    <location>
        <position position="421"/>
    </location>
</feature>
<evidence type="ECO:0000250" key="1"/>
<evidence type="ECO:0000255" key="2"/>
<evidence type="ECO:0000305" key="3"/>
<name>HPSE2_ARATH</name>
<gene>
    <name type="ordered locus">At5g61250</name>
    <name type="ORF">MAF19.29</name>
    <name type="ORF">MFB13.2</name>
</gene>
<reference key="1">
    <citation type="journal article" date="1998" name="DNA Res.">
        <title>Structural analysis of Arabidopsis thaliana chromosome 5. IV. Sequence features of the regions of 1,456,315 bp covered by nineteen physically assigned P1 and TAC clones.</title>
        <authorList>
            <person name="Sato S."/>
            <person name="Kaneko T."/>
            <person name="Kotani H."/>
            <person name="Nakamura Y."/>
            <person name="Asamizu E."/>
            <person name="Miyajima N."/>
            <person name="Tabata S."/>
        </authorList>
    </citation>
    <scope>NUCLEOTIDE SEQUENCE [LARGE SCALE GENOMIC DNA]</scope>
    <source>
        <strain>cv. Columbia</strain>
    </source>
</reference>
<reference key="2">
    <citation type="journal article" date="2017" name="Plant J.">
        <title>Araport11: a complete reannotation of the Arabidopsis thaliana reference genome.</title>
        <authorList>
            <person name="Cheng C.Y."/>
            <person name="Krishnakumar V."/>
            <person name="Chan A.P."/>
            <person name="Thibaud-Nissen F."/>
            <person name="Schobel S."/>
            <person name="Town C.D."/>
        </authorList>
    </citation>
    <scope>GENOME REANNOTATION</scope>
    <source>
        <strain>cv. Columbia</strain>
    </source>
</reference>
<reference key="3">
    <citation type="journal article" date="2003" name="Science">
        <title>Empirical analysis of transcriptional activity in the Arabidopsis genome.</title>
        <authorList>
            <person name="Yamada K."/>
            <person name="Lim J."/>
            <person name="Dale J.M."/>
            <person name="Chen H."/>
            <person name="Shinn P."/>
            <person name="Palm C.J."/>
            <person name="Southwick A.M."/>
            <person name="Wu H.C."/>
            <person name="Kim C.J."/>
            <person name="Nguyen M."/>
            <person name="Pham P.K."/>
            <person name="Cheuk R.F."/>
            <person name="Karlin-Newmann G."/>
            <person name="Liu S.X."/>
            <person name="Lam B."/>
            <person name="Sakano H."/>
            <person name="Wu T."/>
            <person name="Yu G."/>
            <person name="Miranda M."/>
            <person name="Quach H.L."/>
            <person name="Tripp M."/>
            <person name="Chang C.H."/>
            <person name="Lee J.M."/>
            <person name="Toriumi M.J."/>
            <person name="Chan M.M."/>
            <person name="Tang C.C."/>
            <person name="Onodera C.S."/>
            <person name="Deng J.M."/>
            <person name="Akiyama K."/>
            <person name="Ansari Y."/>
            <person name="Arakawa T."/>
            <person name="Banh J."/>
            <person name="Banno F."/>
            <person name="Bowser L."/>
            <person name="Brooks S.Y."/>
            <person name="Carninci P."/>
            <person name="Chao Q."/>
            <person name="Choy N."/>
            <person name="Enju A."/>
            <person name="Goldsmith A.D."/>
            <person name="Gurjal M."/>
            <person name="Hansen N.F."/>
            <person name="Hayashizaki Y."/>
            <person name="Johnson-Hopson C."/>
            <person name="Hsuan V.W."/>
            <person name="Iida K."/>
            <person name="Karnes M."/>
            <person name="Khan S."/>
            <person name="Koesema E."/>
            <person name="Ishida J."/>
            <person name="Jiang P.X."/>
            <person name="Jones T."/>
            <person name="Kawai J."/>
            <person name="Kamiya A."/>
            <person name="Meyers C."/>
            <person name="Nakajima M."/>
            <person name="Narusaka M."/>
            <person name="Seki M."/>
            <person name="Sakurai T."/>
            <person name="Satou M."/>
            <person name="Tamse R."/>
            <person name="Vaysberg M."/>
            <person name="Wallender E.K."/>
            <person name="Wong C."/>
            <person name="Yamamura Y."/>
            <person name="Yuan S."/>
            <person name="Shinozaki K."/>
            <person name="Davis R.W."/>
            <person name="Theologis A."/>
            <person name="Ecker J.R."/>
        </authorList>
    </citation>
    <scope>NUCLEOTIDE SEQUENCE [LARGE SCALE MRNA]</scope>
    <source>
        <strain>cv. Columbia</strain>
    </source>
</reference>
<keyword id="KW-0325">Glycoprotein</keyword>
<keyword id="KW-0378">Hydrolase</keyword>
<keyword id="KW-0458">Lysosome</keyword>
<keyword id="KW-0472">Membrane</keyword>
<keyword id="KW-1185">Reference proteome</keyword>
<keyword id="KW-0964">Secreted</keyword>
<keyword id="KW-0732">Signal</keyword>
<comment type="function">
    <text evidence="1">Endoglycosidase which is a cell surface and extracellular matrix-degrading enzyme. Cleaves heparan sulfate proteoglycans (HSPGs) into heparan sulfate side chains and core proteoglycans (By similarity).</text>
</comment>
<comment type="subcellular location">
    <subcellularLocation>
        <location evidence="1">Lysosome membrane</location>
        <topology evidence="1">Peripheral membrane protein</topology>
    </subcellularLocation>
    <subcellularLocation>
        <location evidence="1">Secreted</location>
    </subcellularLocation>
</comment>
<comment type="similarity">
    <text evidence="3">Belongs to the glycosyl hydrolase 79 family.</text>
</comment>
<comment type="sequence caution" evidence="3">
    <conflict type="erroneous initiation">
        <sequence resource="EMBL-CDS" id="BAB08480"/>
    </conflict>
</comment>
<dbReference type="EC" id="3.2.-.-"/>
<dbReference type="EMBL" id="AB010073">
    <property type="protein sequence ID" value="BAB08480.1"/>
    <property type="status" value="ALT_INIT"/>
    <property type="molecule type" value="Genomic_DNA"/>
</dbReference>
<dbReference type="EMBL" id="CP002688">
    <property type="protein sequence ID" value="AED97442.1"/>
    <property type="molecule type" value="Genomic_DNA"/>
</dbReference>
<dbReference type="EMBL" id="CP002688">
    <property type="protein sequence ID" value="AED97443.1"/>
    <property type="molecule type" value="Genomic_DNA"/>
</dbReference>
<dbReference type="EMBL" id="CP002688">
    <property type="protein sequence ID" value="ANM68404.1"/>
    <property type="molecule type" value="Genomic_DNA"/>
</dbReference>
<dbReference type="EMBL" id="AY099736">
    <property type="protein sequence ID" value="AAM20587.1"/>
    <property type="molecule type" value="mRNA"/>
</dbReference>
<dbReference type="EMBL" id="BT002603">
    <property type="protein sequence ID" value="AAO00963.1"/>
    <property type="molecule type" value="mRNA"/>
</dbReference>
<dbReference type="RefSeq" id="NP_001330163.1">
    <property type="nucleotide sequence ID" value="NM_001345460.1"/>
</dbReference>
<dbReference type="RefSeq" id="NP_200933.2">
    <property type="nucleotide sequence ID" value="NM_125518.5"/>
</dbReference>
<dbReference type="RefSeq" id="NP_851238.1">
    <property type="nucleotide sequence ID" value="NM_180907.3"/>
</dbReference>
<dbReference type="SMR" id="Q8L608"/>
<dbReference type="FunCoup" id="Q8L608">
    <property type="interactions" value="36"/>
</dbReference>
<dbReference type="STRING" id="3702.Q8L608"/>
<dbReference type="CAZy" id="GH79">
    <property type="family name" value="Glycoside Hydrolase Family 79"/>
</dbReference>
<dbReference type="GlyGen" id="Q8L608">
    <property type="glycosylation" value="5 sites"/>
</dbReference>
<dbReference type="PaxDb" id="3702-AT5G61250.2"/>
<dbReference type="ProteomicsDB" id="230139"/>
<dbReference type="EnsemblPlants" id="AT5G61250.1">
    <property type="protein sequence ID" value="AT5G61250.1"/>
    <property type="gene ID" value="AT5G61250"/>
</dbReference>
<dbReference type="EnsemblPlants" id="AT5G61250.2">
    <property type="protein sequence ID" value="AT5G61250.2"/>
    <property type="gene ID" value="AT5G61250"/>
</dbReference>
<dbReference type="EnsemblPlants" id="AT5G61250.3">
    <property type="protein sequence ID" value="AT5G61250.3"/>
    <property type="gene ID" value="AT5G61250"/>
</dbReference>
<dbReference type="GeneID" id="836246"/>
<dbReference type="Gramene" id="AT5G61250.1">
    <property type="protein sequence ID" value="AT5G61250.1"/>
    <property type="gene ID" value="AT5G61250"/>
</dbReference>
<dbReference type="Gramene" id="AT5G61250.2">
    <property type="protein sequence ID" value="AT5G61250.2"/>
    <property type="gene ID" value="AT5G61250"/>
</dbReference>
<dbReference type="Gramene" id="AT5G61250.3">
    <property type="protein sequence ID" value="AT5G61250.3"/>
    <property type="gene ID" value="AT5G61250"/>
</dbReference>
<dbReference type="KEGG" id="ath:AT5G61250"/>
<dbReference type="Araport" id="AT5G61250"/>
<dbReference type="TAIR" id="AT5G61250">
    <property type="gene designation" value="GUS1"/>
</dbReference>
<dbReference type="eggNOG" id="ENOG502QQST">
    <property type="taxonomic scope" value="Eukaryota"/>
</dbReference>
<dbReference type="HOGENOM" id="CLU_021823_3_0_1"/>
<dbReference type="InParanoid" id="Q8L608"/>
<dbReference type="OMA" id="KVSWVGN"/>
<dbReference type="PhylomeDB" id="Q8L608"/>
<dbReference type="PRO" id="PR:Q8L608"/>
<dbReference type="Proteomes" id="UP000006548">
    <property type="component" value="Chromosome 5"/>
</dbReference>
<dbReference type="ExpressionAtlas" id="Q8L608">
    <property type="expression patterns" value="baseline and differential"/>
</dbReference>
<dbReference type="GO" id="GO:0005576">
    <property type="term" value="C:extracellular region"/>
    <property type="evidence" value="ECO:0007669"/>
    <property type="project" value="UniProtKB-SubCell"/>
</dbReference>
<dbReference type="GO" id="GO:0005765">
    <property type="term" value="C:lysosomal membrane"/>
    <property type="evidence" value="ECO:0007669"/>
    <property type="project" value="UniProtKB-SubCell"/>
</dbReference>
<dbReference type="GO" id="GO:0004566">
    <property type="term" value="F:beta-glucuronidase activity"/>
    <property type="evidence" value="ECO:0000250"/>
    <property type="project" value="TAIR"/>
</dbReference>
<dbReference type="FunFam" id="3.20.20.80:FF:000023">
    <property type="entry name" value="heparanase-like protein 3"/>
    <property type="match status" value="1"/>
</dbReference>
<dbReference type="Gene3D" id="3.20.20.80">
    <property type="entry name" value="Glycosidases"/>
    <property type="match status" value="1"/>
</dbReference>
<dbReference type="InterPro" id="IPR005199">
    <property type="entry name" value="Glyco_hydro_79"/>
</dbReference>
<dbReference type="InterPro" id="IPR017853">
    <property type="entry name" value="Glycoside_hydrolase_SF"/>
</dbReference>
<dbReference type="PANTHER" id="PTHR14363:SF37">
    <property type="entry name" value="HEPARANASE-LIKE PROTEIN 2"/>
    <property type="match status" value="1"/>
</dbReference>
<dbReference type="PANTHER" id="PTHR14363">
    <property type="entry name" value="HEPARANASE-RELATED"/>
    <property type="match status" value="1"/>
</dbReference>
<dbReference type="Pfam" id="PF03662">
    <property type="entry name" value="Glyco_hydro_79n"/>
    <property type="match status" value="1"/>
</dbReference>
<dbReference type="SUPFAM" id="SSF51445">
    <property type="entry name" value="(Trans)glycosidases"/>
    <property type="match status" value="1"/>
</dbReference>
<proteinExistence type="evidence at transcript level"/>
<sequence>MGFNVVVFLSCLLLLPPVTFGSNMERTTLVIDGSRRIAETDENFICATLDWWPPEKCNYDQCPWGYASLINLNLASPLLAKAIQAFRTLRIRIGGSLQDQVIYDVGDLKTPCTQFKKTDDGLFGFSEGCLYMKRWDEVNHFFNATGAIVTFGLNALHGRNKLNGTAWGGDWDHTNTQDFMNYTVSKGYAIDSWEFGNELSGSGIWASVSVELYGKDLIVLKNVIKNVYKNSRTKPLVVAPGGFFEEQWYSELLRLSGPGVLDVLTHHIYNLGPGNDPKLVNKILDPNYLSGISELFANVNQTIQEHGPWAAAWVGEAGGAFNSGGRQVSETFINSFWYLDQLGISSKHNTKVYCRQALVGGFYGLLEKETFVPNPDYYSALLWHRLMGKGILGVQTTASEYLRAYVHCSKRRAGITILLINLSKHTTFTVAVSNGVKVVLQAESMKRKSFLETIKSKVSWVGNKASDGYLNREEYHLSPKDGDLRSKIMLLNGKPLVPTATGDIPKLEPVRHGVKSPVYINPLSISFIVLPTFDAPACS</sequence>
<accession>Q8L608</accession>
<accession>Q9FLK8</accession>
<organism>
    <name type="scientific">Arabidopsis thaliana</name>
    <name type="common">Mouse-ear cress</name>
    <dbReference type="NCBI Taxonomy" id="3702"/>
    <lineage>
        <taxon>Eukaryota</taxon>
        <taxon>Viridiplantae</taxon>
        <taxon>Streptophyta</taxon>
        <taxon>Embryophyta</taxon>
        <taxon>Tracheophyta</taxon>
        <taxon>Spermatophyta</taxon>
        <taxon>Magnoliopsida</taxon>
        <taxon>eudicotyledons</taxon>
        <taxon>Gunneridae</taxon>
        <taxon>Pentapetalae</taxon>
        <taxon>rosids</taxon>
        <taxon>malvids</taxon>
        <taxon>Brassicales</taxon>
        <taxon>Brassicaceae</taxon>
        <taxon>Camelineae</taxon>
        <taxon>Arabidopsis</taxon>
    </lineage>
</organism>